<reference key="1">
    <citation type="journal article" date="2005" name="Nature">
        <title>Sequencing of Aspergillus nidulans and comparative analysis with A. fumigatus and A. oryzae.</title>
        <authorList>
            <person name="Galagan J.E."/>
            <person name="Calvo S.E."/>
            <person name="Cuomo C."/>
            <person name="Ma L.-J."/>
            <person name="Wortman J.R."/>
            <person name="Batzoglou S."/>
            <person name="Lee S.-I."/>
            <person name="Bastuerkmen M."/>
            <person name="Spevak C.C."/>
            <person name="Clutterbuck J."/>
            <person name="Kapitonov V."/>
            <person name="Jurka J."/>
            <person name="Scazzocchio C."/>
            <person name="Farman M.L."/>
            <person name="Butler J."/>
            <person name="Purcell S."/>
            <person name="Harris S."/>
            <person name="Braus G.H."/>
            <person name="Draht O."/>
            <person name="Busch S."/>
            <person name="D'Enfert C."/>
            <person name="Bouchier C."/>
            <person name="Goldman G.H."/>
            <person name="Bell-Pedersen D."/>
            <person name="Griffiths-Jones S."/>
            <person name="Doonan J.H."/>
            <person name="Yu J."/>
            <person name="Vienken K."/>
            <person name="Pain A."/>
            <person name="Freitag M."/>
            <person name="Selker E.U."/>
            <person name="Archer D.B."/>
            <person name="Penalva M.A."/>
            <person name="Oakley B.R."/>
            <person name="Momany M."/>
            <person name="Tanaka T."/>
            <person name="Kumagai T."/>
            <person name="Asai K."/>
            <person name="Machida M."/>
            <person name="Nierman W.C."/>
            <person name="Denning D.W."/>
            <person name="Caddick M.X."/>
            <person name="Hynes M."/>
            <person name="Paoletti M."/>
            <person name="Fischer R."/>
            <person name="Miller B.L."/>
            <person name="Dyer P.S."/>
            <person name="Sachs M.S."/>
            <person name="Osmani S.A."/>
            <person name="Birren B.W."/>
        </authorList>
    </citation>
    <scope>NUCLEOTIDE SEQUENCE [LARGE SCALE GENOMIC DNA]</scope>
    <source>
        <strain>FGSC A4 / ATCC 38163 / CBS 112.46 / NRRL 194 / M139</strain>
    </source>
</reference>
<reference key="2">
    <citation type="journal article" date="2009" name="Fungal Genet. Biol.">
        <title>The 2008 update of the Aspergillus nidulans genome annotation: a community effort.</title>
        <authorList>
            <person name="Wortman J.R."/>
            <person name="Gilsenan J.M."/>
            <person name="Joardar V."/>
            <person name="Deegan J."/>
            <person name="Clutterbuck J."/>
            <person name="Andersen M.R."/>
            <person name="Archer D."/>
            <person name="Bencina M."/>
            <person name="Braus G."/>
            <person name="Coutinho P."/>
            <person name="von Dohren H."/>
            <person name="Doonan J."/>
            <person name="Driessen A.J."/>
            <person name="Durek P."/>
            <person name="Espeso E."/>
            <person name="Fekete E."/>
            <person name="Flipphi M."/>
            <person name="Estrada C.G."/>
            <person name="Geysens S."/>
            <person name="Goldman G."/>
            <person name="de Groot P.W."/>
            <person name="Hansen K."/>
            <person name="Harris S.D."/>
            <person name="Heinekamp T."/>
            <person name="Helmstaedt K."/>
            <person name="Henrissat B."/>
            <person name="Hofmann G."/>
            <person name="Homan T."/>
            <person name="Horio T."/>
            <person name="Horiuchi H."/>
            <person name="James S."/>
            <person name="Jones M."/>
            <person name="Karaffa L."/>
            <person name="Karanyi Z."/>
            <person name="Kato M."/>
            <person name="Keller N."/>
            <person name="Kelly D.E."/>
            <person name="Kiel J.A."/>
            <person name="Kim J.M."/>
            <person name="van der Klei I.J."/>
            <person name="Klis F.M."/>
            <person name="Kovalchuk A."/>
            <person name="Krasevec N."/>
            <person name="Kubicek C.P."/>
            <person name="Liu B."/>
            <person name="Maccabe A."/>
            <person name="Meyer V."/>
            <person name="Mirabito P."/>
            <person name="Miskei M."/>
            <person name="Mos M."/>
            <person name="Mullins J."/>
            <person name="Nelson D.R."/>
            <person name="Nielsen J."/>
            <person name="Oakley B.R."/>
            <person name="Osmani S.A."/>
            <person name="Pakula T."/>
            <person name="Paszewski A."/>
            <person name="Paulsen I."/>
            <person name="Pilsyk S."/>
            <person name="Pocsi I."/>
            <person name="Punt P.J."/>
            <person name="Ram A.F."/>
            <person name="Ren Q."/>
            <person name="Robellet X."/>
            <person name="Robson G."/>
            <person name="Seiboth B."/>
            <person name="van Solingen P."/>
            <person name="Specht T."/>
            <person name="Sun J."/>
            <person name="Taheri-Talesh N."/>
            <person name="Takeshita N."/>
            <person name="Ussery D."/>
            <person name="vanKuyk P.A."/>
            <person name="Visser H."/>
            <person name="van de Vondervoort P.J."/>
            <person name="de Vries R.P."/>
            <person name="Walton J."/>
            <person name="Xiang X."/>
            <person name="Xiong Y."/>
            <person name="Zeng A.P."/>
            <person name="Brandt B.W."/>
            <person name="Cornell M.J."/>
            <person name="van den Hondel C.A."/>
            <person name="Visser J."/>
            <person name="Oliver S.G."/>
            <person name="Turner G."/>
        </authorList>
    </citation>
    <scope>GENOME REANNOTATION</scope>
    <source>
        <strain>FGSC A4 / ATCC 38163 / CBS 112.46 / NRRL 194 / M139</strain>
    </source>
</reference>
<organism>
    <name type="scientific">Emericella nidulans (strain FGSC A4 / ATCC 38163 / CBS 112.46 / NRRL 194 / M139)</name>
    <name type="common">Aspergillus nidulans</name>
    <dbReference type="NCBI Taxonomy" id="227321"/>
    <lineage>
        <taxon>Eukaryota</taxon>
        <taxon>Fungi</taxon>
        <taxon>Dikarya</taxon>
        <taxon>Ascomycota</taxon>
        <taxon>Pezizomycotina</taxon>
        <taxon>Eurotiomycetes</taxon>
        <taxon>Eurotiomycetidae</taxon>
        <taxon>Eurotiales</taxon>
        <taxon>Aspergillaceae</taxon>
        <taxon>Aspergillus</taxon>
        <taxon>Aspergillus subgen. Nidulantes</taxon>
    </lineage>
</organism>
<evidence type="ECO:0000255" key="1">
    <source>
        <dbReference type="HAMAP-Rule" id="MF_03199"/>
    </source>
</evidence>
<evidence type="ECO:0000255" key="2">
    <source>
        <dbReference type="PROSITE-ProRule" id="PRU00067"/>
    </source>
</evidence>
<evidence type="ECO:0000256" key="3">
    <source>
        <dbReference type="SAM" id="MobiDB-lite"/>
    </source>
</evidence>
<comment type="function">
    <text evidence="1">Mediates the reversible addition of palmitate to target proteins, thereby regulating their membrane association and biological function.</text>
</comment>
<comment type="catalytic activity">
    <reaction evidence="1">
        <text>L-cysteinyl-[protein] + hexadecanoyl-CoA = S-hexadecanoyl-L-cysteinyl-[protein] + CoA</text>
        <dbReference type="Rhea" id="RHEA:36683"/>
        <dbReference type="Rhea" id="RHEA-COMP:10131"/>
        <dbReference type="Rhea" id="RHEA-COMP:11032"/>
        <dbReference type="ChEBI" id="CHEBI:29950"/>
        <dbReference type="ChEBI" id="CHEBI:57287"/>
        <dbReference type="ChEBI" id="CHEBI:57379"/>
        <dbReference type="ChEBI" id="CHEBI:74151"/>
        <dbReference type="EC" id="2.3.1.225"/>
    </reaction>
</comment>
<comment type="subcellular location">
    <subcellularLocation>
        <location evidence="1">Endoplasmic reticulum membrane</location>
        <topology evidence="1">Multi-pass membrane protein</topology>
    </subcellularLocation>
</comment>
<comment type="domain">
    <text evidence="1">The DHHC domain is required for palmitoyltransferase activity.</text>
</comment>
<comment type="similarity">
    <text evidence="1">Belongs to the DHHC palmitoyltransferase family. PFA4 subfamily.</text>
</comment>
<keyword id="KW-0012">Acyltransferase</keyword>
<keyword id="KW-0256">Endoplasmic reticulum</keyword>
<keyword id="KW-0449">Lipoprotein</keyword>
<keyword id="KW-0472">Membrane</keyword>
<keyword id="KW-0564">Palmitate</keyword>
<keyword id="KW-1185">Reference proteome</keyword>
<keyword id="KW-0808">Transferase</keyword>
<keyword id="KW-0812">Transmembrane</keyword>
<keyword id="KW-1133">Transmembrane helix</keyword>
<accession>Q5BD15</accession>
<accession>C8VN05</accession>
<sequence>MLCSSFSVSRLAIPAVCILIAFLAYTSQIFFLYFEDAPLKEDEVWRINILAICIWICYYRACTVDPGHVPKGWMPSDRERLKADRASGRQRWCRRCEAYKPPRAHHCKTCERCVPKMDHHCPWTSNCVSHFTFPHFARFLFYAVVGIAYLETRLWQRVSKVWGSRHLPSYLGPSMGQIGHLFVLFVTNSLTLFALSLLLLRTLWSLGSNTTTIESWEIERHETLLRRARRLGGSLPGPGGISVHITKQEFPYDIGIWSNIRAGMGGSANVLSWFWPLARTPDRSTGLEFEENGFEDPTVSWPPPDPDRIPLPPMDQRDSFMYDITDTSGTSGQIDIEAFNRRKEADLRRRRAPTEIERRKPFHVRLEEYSNGSSDAEADTGSDDDSDHGEEGWKNSEGERLRDFGVDEEAEFYDEEDIPLALLIQQRAKRQHLSQ</sequence>
<gene>
    <name evidence="1" type="primary">pfa4</name>
    <name type="ORF">AN1565</name>
</gene>
<feature type="chain" id="PRO_0000212966" description="Palmitoyltransferase pfa4">
    <location>
        <begin position="1"/>
        <end position="435"/>
    </location>
</feature>
<feature type="topological domain" description="Cytoplasmic" evidence="1">
    <location>
        <begin position="1"/>
        <end position="10"/>
    </location>
</feature>
<feature type="transmembrane region" description="Helical" evidence="1">
    <location>
        <begin position="11"/>
        <end position="31"/>
    </location>
</feature>
<feature type="topological domain" description="Lumenal" evidence="1">
    <location>
        <begin position="32"/>
        <end position="48"/>
    </location>
</feature>
<feature type="transmembrane region" description="Helical" evidence="1">
    <location>
        <begin position="49"/>
        <end position="69"/>
    </location>
</feature>
<feature type="topological domain" description="Cytoplasmic" evidence="1">
    <location>
        <begin position="70"/>
        <end position="129"/>
    </location>
</feature>
<feature type="transmembrane region" description="Helical" evidence="1">
    <location>
        <begin position="130"/>
        <end position="150"/>
    </location>
</feature>
<feature type="topological domain" description="Lumenal" evidence="1">
    <location>
        <begin position="151"/>
        <end position="179"/>
    </location>
</feature>
<feature type="transmembrane region" description="Helical" evidence="1">
    <location>
        <begin position="180"/>
        <end position="200"/>
    </location>
</feature>
<feature type="topological domain" description="Cytoplasmic" evidence="1">
    <location>
        <begin position="201"/>
        <end position="435"/>
    </location>
</feature>
<feature type="domain" description="DHHC" evidence="2">
    <location>
        <begin position="91"/>
        <end position="141"/>
    </location>
</feature>
<feature type="region of interest" description="Disordered" evidence="3">
    <location>
        <begin position="359"/>
        <end position="408"/>
    </location>
</feature>
<feature type="compositionally biased region" description="Basic and acidic residues" evidence="3">
    <location>
        <begin position="359"/>
        <end position="368"/>
    </location>
</feature>
<feature type="compositionally biased region" description="Acidic residues" evidence="3">
    <location>
        <begin position="376"/>
        <end position="388"/>
    </location>
</feature>
<feature type="compositionally biased region" description="Basic and acidic residues" evidence="3">
    <location>
        <begin position="389"/>
        <end position="405"/>
    </location>
</feature>
<feature type="active site" description="S-palmitoyl cysteine intermediate" evidence="1">
    <location>
        <position position="121"/>
    </location>
</feature>
<proteinExistence type="inferred from homology"/>
<dbReference type="EC" id="2.3.1.225" evidence="1"/>
<dbReference type="EMBL" id="AACD01000025">
    <property type="protein sequence ID" value="EAA64272.1"/>
    <property type="molecule type" value="Genomic_DNA"/>
</dbReference>
<dbReference type="EMBL" id="BN001307">
    <property type="protein sequence ID" value="CBF85122.1"/>
    <property type="molecule type" value="Genomic_DNA"/>
</dbReference>
<dbReference type="RefSeq" id="XP_659169.1">
    <property type="nucleotide sequence ID" value="XM_654077.1"/>
</dbReference>
<dbReference type="FunCoup" id="Q5BD15">
    <property type="interactions" value="27"/>
</dbReference>
<dbReference type="STRING" id="227321.Q5BD15"/>
<dbReference type="EnsemblFungi" id="CBF85122">
    <property type="protein sequence ID" value="CBF85122"/>
    <property type="gene ID" value="ANIA_01565"/>
</dbReference>
<dbReference type="KEGG" id="ani:ANIA_01565"/>
<dbReference type="VEuPathDB" id="FungiDB:AN1565"/>
<dbReference type="eggNOG" id="KOG1314">
    <property type="taxonomic scope" value="Eukaryota"/>
</dbReference>
<dbReference type="HOGENOM" id="CLU_027721_8_1_1"/>
<dbReference type="InParanoid" id="Q5BD15"/>
<dbReference type="OMA" id="WEIERHK"/>
<dbReference type="OrthoDB" id="331948at2759"/>
<dbReference type="Proteomes" id="UP000000560">
    <property type="component" value="Chromosome VII"/>
</dbReference>
<dbReference type="GO" id="GO:0005783">
    <property type="term" value="C:endoplasmic reticulum"/>
    <property type="evidence" value="ECO:0000318"/>
    <property type="project" value="GO_Central"/>
</dbReference>
<dbReference type="GO" id="GO:0005789">
    <property type="term" value="C:endoplasmic reticulum membrane"/>
    <property type="evidence" value="ECO:0007669"/>
    <property type="project" value="UniProtKB-SubCell"/>
</dbReference>
<dbReference type="GO" id="GO:0005794">
    <property type="term" value="C:Golgi apparatus"/>
    <property type="evidence" value="ECO:0000318"/>
    <property type="project" value="GO_Central"/>
</dbReference>
<dbReference type="GO" id="GO:0019706">
    <property type="term" value="F:protein-cysteine S-palmitoyltransferase activity"/>
    <property type="evidence" value="ECO:0000318"/>
    <property type="project" value="GO_Central"/>
</dbReference>
<dbReference type="GO" id="GO:0006612">
    <property type="term" value="P:protein targeting to membrane"/>
    <property type="evidence" value="ECO:0000318"/>
    <property type="project" value="GO_Central"/>
</dbReference>
<dbReference type="HAMAP" id="MF_03199">
    <property type="entry name" value="DHHC_PAT_PFA4"/>
    <property type="match status" value="1"/>
</dbReference>
<dbReference type="InterPro" id="IPR001594">
    <property type="entry name" value="Palmitoyltrfase_DHHC"/>
</dbReference>
<dbReference type="InterPro" id="IPR033682">
    <property type="entry name" value="PFA4"/>
</dbReference>
<dbReference type="InterPro" id="IPR039859">
    <property type="entry name" value="PFA4/ZDH16/20/ERF2-like"/>
</dbReference>
<dbReference type="PANTHER" id="PTHR12246">
    <property type="entry name" value="PALMITOYLTRANSFERASE ZDHHC16"/>
    <property type="match status" value="1"/>
</dbReference>
<dbReference type="Pfam" id="PF01529">
    <property type="entry name" value="DHHC"/>
    <property type="match status" value="1"/>
</dbReference>
<dbReference type="PROSITE" id="PS50216">
    <property type="entry name" value="DHHC"/>
    <property type="match status" value="1"/>
</dbReference>
<name>PFA4_EMENI</name>
<protein>
    <recommendedName>
        <fullName evidence="1">Palmitoyltransferase pfa4</fullName>
        <ecNumber evidence="1">2.3.1.225</ecNumber>
    </recommendedName>
    <alternativeName>
        <fullName evidence="1">Protein S-acyltransferase</fullName>
        <shortName evidence="1">PAT</shortName>
    </alternativeName>
    <alternativeName>
        <fullName evidence="1">Protein fatty acyltransferase 4</fullName>
    </alternativeName>
</protein>